<comment type="catalytic activity">
    <reaction evidence="1">
        <text>urea + 2 H2O + H(+) = hydrogencarbonate + 2 NH4(+)</text>
        <dbReference type="Rhea" id="RHEA:20557"/>
        <dbReference type="ChEBI" id="CHEBI:15377"/>
        <dbReference type="ChEBI" id="CHEBI:15378"/>
        <dbReference type="ChEBI" id="CHEBI:16199"/>
        <dbReference type="ChEBI" id="CHEBI:17544"/>
        <dbReference type="ChEBI" id="CHEBI:28938"/>
        <dbReference type="EC" id="3.5.1.5"/>
    </reaction>
</comment>
<comment type="pathway">
    <text evidence="1">Nitrogen metabolism; urea degradation; CO(2) and NH(3) from urea (urease route): step 1/1.</text>
</comment>
<comment type="subunit">
    <text evidence="1">Heterotrimer of UreA (gamma), UreB (beta) and UreC (alpha) subunits. Three heterotrimers associate to form the active enzyme.</text>
</comment>
<comment type="subcellular location">
    <subcellularLocation>
        <location evidence="1">Cytoplasm</location>
    </subcellularLocation>
</comment>
<comment type="similarity">
    <text evidence="1">Belongs to the urease gamma subunit family.</text>
</comment>
<name>URE3_MYCTA</name>
<feature type="chain" id="PRO_1000046342" description="Urease subunit gamma">
    <location>
        <begin position="1"/>
        <end position="100"/>
    </location>
</feature>
<keyword id="KW-0963">Cytoplasm</keyword>
<keyword id="KW-0378">Hydrolase</keyword>
<keyword id="KW-1185">Reference proteome</keyword>
<reference key="1">
    <citation type="journal article" date="2008" name="PLoS ONE">
        <title>Genetic basis of virulence attenuation revealed by comparative genomic analysis of Mycobacterium tuberculosis strain H37Ra versus H37Rv.</title>
        <authorList>
            <person name="Zheng H."/>
            <person name="Lu L."/>
            <person name="Wang B."/>
            <person name="Pu S."/>
            <person name="Zhang X."/>
            <person name="Zhu G."/>
            <person name="Shi W."/>
            <person name="Zhang L."/>
            <person name="Wang H."/>
            <person name="Wang S."/>
            <person name="Zhao G."/>
            <person name="Zhang Y."/>
        </authorList>
    </citation>
    <scope>NUCLEOTIDE SEQUENCE [LARGE SCALE GENOMIC DNA]</scope>
    <source>
        <strain>ATCC 25177 / H37Ra</strain>
    </source>
</reference>
<gene>
    <name evidence="1" type="primary">ureA</name>
    <name type="ordered locus">MRA_1859</name>
</gene>
<proteinExistence type="inferred from homology"/>
<evidence type="ECO:0000255" key="1">
    <source>
        <dbReference type="HAMAP-Rule" id="MF_00739"/>
    </source>
</evidence>
<protein>
    <recommendedName>
        <fullName evidence="1">Urease subunit gamma</fullName>
        <ecNumber evidence="1">3.5.1.5</ecNumber>
    </recommendedName>
    <alternativeName>
        <fullName evidence="1">Urea amidohydrolase subunit gamma</fullName>
    </alternativeName>
</protein>
<sequence length="100" mass="11090">MRLTPHEQERLLLSYAAELARRRRARGLRLNHPEAIAVIADHILEGARDGRTVAELMASGREVLGRDDVMEGVPEMLAEVQVEATFPDGTKLVTVHQPIA</sequence>
<organism>
    <name type="scientific">Mycobacterium tuberculosis (strain ATCC 25177 / H37Ra)</name>
    <dbReference type="NCBI Taxonomy" id="419947"/>
    <lineage>
        <taxon>Bacteria</taxon>
        <taxon>Bacillati</taxon>
        <taxon>Actinomycetota</taxon>
        <taxon>Actinomycetes</taxon>
        <taxon>Mycobacteriales</taxon>
        <taxon>Mycobacteriaceae</taxon>
        <taxon>Mycobacterium</taxon>
        <taxon>Mycobacterium tuberculosis complex</taxon>
    </lineage>
</organism>
<accession>A5U3L5</accession>
<dbReference type="EC" id="3.5.1.5" evidence="1"/>
<dbReference type="EMBL" id="CP000611">
    <property type="protein sequence ID" value="ABQ73615.1"/>
    <property type="molecule type" value="Genomic_DNA"/>
</dbReference>
<dbReference type="RefSeq" id="WP_003409305.1">
    <property type="nucleotide sequence ID" value="NZ_CP016972.1"/>
</dbReference>
<dbReference type="SMR" id="A5U3L5"/>
<dbReference type="KEGG" id="mra:MRA_1859"/>
<dbReference type="eggNOG" id="COG0831">
    <property type="taxonomic scope" value="Bacteria"/>
</dbReference>
<dbReference type="HOGENOM" id="CLU_145825_1_0_11"/>
<dbReference type="UniPathway" id="UPA00258">
    <property type="reaction ID" value="UER00370"/>
</dbReference>
<dbReference type="Proteomes" id="UP000001988">
    <property type="component" value="Chromosome"/>
</dbReference>
<dbReference type="GO" id="GO:0005737">
    <property type="term" value="C:cytoplasm"/>
    <property type="evidence" value="ECO:0007669"/>
    <property type="project" value="UniProtKB-SubCell"/>
</dbReference>
<dbReference type="GO" id="GO:0016151">
    <property type="term" value="F:nickel cation binding"/>
    <property type="evidence" value="ECO:0007669"/>
    <property type="project" value="InterPro"/>
</dbReference>
<dbReference type="GO" id="GO:0009039">
    <property type="term" value="F:urease activity"/>
    <property type="evidence" value="ECO:0007669"/>
    <property type="project" value="UniProtKB-UniRule"/>
</dbReference>
<dbReference type="GO" id="GO:0043419">
    <property type="term" value="P:urea catabolic process"/>
    <property type="evidence" value="ECO:0007669"/>
    <property type="project" value="UniProtKB-UniRule"/>
</dbReference>
<dbReference type="CDD" id="cd00390">
    <property type="entry name" value="Urease_gamma"/>
    <property type="match status" value="1"/>
</dbReference>
<dbReference type="FunFam" id="3.30.280.10:FF:000002">
    <property type="entry name" value="Urease subunit gamma"/>
    <property type="match status" value="1"/>
</dbReference>
<dbReference type="Gene3D" id="3.30.280.10">
    <property type="entry name" value="Urease, gamma-like subunit"/>
    <property type="match status" value="1"/>
</dbReference>
<dbReference type="HAMAP" id="MF_00739">
    <property type="entry name" value="Urease_gamma"/>
    <property type="match status" value="1"/>
</dbReference>
<dbReference type="InterPro" id="IPR012010">
    <property type="entry name" value="Urease_gamma"/>
</dbReference>
<dbReference type="InterPro" id="IPR002026">
    <property type="entry name" value="Urease_gamma/gamma-beta_su"/>
</dbReference>
<dbReference type="InterPro" id="IPR036463">
    <property type="entry name" value="Urease_gamma_sf"/>
</dbReference>
<dbReference type="InterPro" id="IPR050069">
    <property type="entry name" value="Urease_subunit"/>
</dbReference>
<dbReference type="NCBIfam" id="NF009712">
    <property type="entry name" value="PRK13241.1"/>
    <property type="match status" value="1"/>
</dbReference>
<dbReference type="NCBIfam" id="TIGR00193">
    <property type="entry name" value="urease_gam"/>
    <property type="match status" value="1"/>
</dbReference>
<dbReference type="PANTHER" id="PTHR33569">
    <property type="entry name" value="UREASE"/>
    <property type="match status" value="1"/>
</dbReference>
<dbReference type="PANTHER" id="PTHR33569:SF1">
    <property type="entry name" value="UREASE"/>
    <property type="match status" value="1"/>
</dbReference>
<dbReference type="Pfam" id="PF00547">
    <property type="entry name" value="Urease_gamma"/>
    <property type="match status" value="1"/>
</dbReference>
<dbReference type="PIRSF" id="PIRSF001223">
    <property type="entry name" value="Urease_gamma"/>
    <property type="match status" value="1"/>
</dbReference>
<dbReference type="SUPFAM" id="SSF54111">
    <property type="entry name" value="Urease, gamma-subunit"/>
    <property type="match status" value="1"/>
</dbReference>